<evidence type="ECO:0000250" key="1"/>
<evidence type="ECO:0000305" key="2"/>
<evidence type="ECO:0000305" key="3">
    <source>
    </source>
</evidence>
<sequence>MSWQAYVDEHLMCDIDGQGQQLAASAIVGHDGSVWAQSSSFPQLKPEEITGIMKDFDEPGHLAPTGLHLGGTKYMVIQGEAGAVIRGKKGSGGITIKKTGQALVFGIYEEPVTPGQCNMVVERLGDYLVEQGL</sequence>
<feature type="initiator methionine" description="Removed" evidence="1">
    <location>
        <position position="1"/>
    </location>
</feature>
<feature type="chain" id="PRO_0000424965" description="Profilin-3">
    <location>
        <begin position="2"/>
        <end position="133"/>
    </location>
</feature>
<feature type="short sequence motif" description="Involved in PIP2 interaction">
    <location>
        <begin position="83"/>
        <end position="99"/>
    </location>
</feature>
<feature type="modified residue" description="Phosphothreonine" evidence="1">
    <location>
        <position position="113"/>
    </location>
</feature>
<feature type="disulfide bond" evidence="3">
    <location>
        <begin position="13"/>
        <end position="117"/>
    </location>
</feature>
<accession>A4KA44</accession>
<name>PROF3_CORAV</name>
<dbReference type="EMBL" id="DQ663548">
    <property type="protein sequence ID" value="ABG81301.1"/>
    <property type="molecule type" value="mRNA"/>
</dbReference>
<dbReference type="SMR" id="A4KA44"/>
<dbReference type="Allergome" id="244">
    <property type="allergen name" value="Cor a 2"/>
</dbReference>
<dbReference type="GO" id="GO:0005938">
    <property type="term" value="C:cell cortex"/>
    <property type="evidence" value="ECO:0007669"/>
    <property type="project" value="TreeGrafter"/>
</dbReference>
<dbReference type="GO" id="GO:0005856">
    <property type="term" value="C:cytoskeleton"/>
    <property type="evidence" value="ECO:0007669"/>
    <property type="project" value="UniProtKB-SubCell"/>
</dbReference>
<dbReference type="GO" id="GO:0003785">
    <property type="term" value="F:actin monomer binding"/>
    <property type="evidence" value="ECO:0007669"/>
    <property type="project" value="TreeGrafter"/>
</dbReference>
<dbReference type="CDD" id="cd00148">
    <property type="entry name" value="PROF"/>
    <property type="match status" value="1"/>
</dbReference>
<dbReference type="FunFam" id="3.30.450.30:FF:000001">
    <property type="entry name" value="Profilin"/>
    <property type="match status" value="1"/>
</dbReference>
<dbReference type="Gene3D" id="3.30.450.30">
    <property type="entry name" value="Dynein light chain 2a, cytoplasmic"/>
    <property type="match status" value="1"/>
</dbReference>
<dbReference type="InterPro" id="IPR048278">
    <property type="entry name" value="PFN"/>
</dbReference>
<dbReference type="InterPro" id="IPR005455">
    <property type="entry name" value="PFN_euk"/>
</dbReference>
<dbReference type="InterPro" id="IPR036140">
    <property type="entry name" value="PFN_sf"/>
</dbReference>
<dbReference type="InterPro" id="IPR027310">
    <property type="entry name" value="Profilin_CS"/>
</dbReference>
<dbReference type="PANTHER" id="PTHR11604">
    <property type="entry name" value="PROFILIN"/>
    <property type="match status" value="1"/>
</dbReference>
<dbReference type="PANTHER" id="PTHR11604:SF25">
    <property type="entry name" value="PROFILIN-5"/>
    <property type="match status" value="1"/>
</dbReference>
<dbReference type="Pfam" id="PF00235">
    <property type="entry name" value="Profilin"/>
    <property type="match status" value="1"/>
</dbReference>
<dbReference type="PRINTS" id="PR00392">
    <property type="entry name" value="PROFILIN"/>
</dbReference>
<dbReference type="PRINTS" id="PR01640">
    <property type="entry name" value="PROFILINPLNT"/>
</dbReference>
<dbReference type="SMART" id="SM00392">
    <property type="entry name" value="PROF"/>
    <property type="match status" value="1"/>
</dbReference>
<dbReference type="SUPFAM" id="SSF55770">
    <property type="entry name" value="Profilin (actin-binding protein)"/>
    <property type="match status" value="1"/>
</dbReference>
<dbReference type="PROSITE" id="PS00414">
    <property type="entry name" value="PROFILIN"/>
    <property type="match status" value="1"/>
</dbReference>
<organism>
    <name type="scientific">Corylus avellana</name>
    <name type="common">European hazel</name>
    <name type="synonym">Corylus maxima</name>
    <dbReference type="NCBI Taxonomy" id="13451"/>
    <lineage>
        <taxon>Eukaryota</taxon>
        <taxon>Viridiplantae</taxon>
        <taxon>Streptophyta</taxon>
        <taxon>Embryophyta</taxon>
        <taxon>Tracheophyta</taxon>
        <taxon>Spermatophyta</taxon>
        <taxon>Magnoliopsida</taxon>
        <taxon>eudicotyledons</taxon>
        <taxon>Gunneridae</taxon>
        <taxon>Pentapetalae</taxon>
        <taxon>rosids</taxon>
        <taxon>fabids</taxon>
        <taxon>Fagales</taxon>
        <taxon>Betulaceae</taxon>
        <taxon>Corylus</taxon>
    </lineage>
</organism>
<protein>
    <recommendedName>
        <fullName>Profilin-3</fullName>
    </recommendedName>
    <alternativeName>
        <fullName>Allergen Cor a 2</fullName>
    </alternativeName>
    <alternativeName>
        <fullName>Pollen allergen Cor a 2</fullName>
    </alternativeName>
    <allergenName>Cor a 2</allergenName>
</protein>
<comment type="function">
    <text evidence="1">Binds to actin and affects the structure of the cytoskeleton. At high concentrations, profilin prevents the polymerization of actin, whereas it enhances it at low concentrations (By similarity).</text>
</comment>
<comment type="subunit">
    <text evidence="1">Occurs in many kinds of cells as a complex with monomeric actin in a 1:1 ratio.</text>
</comment>
<comment type="subcellular location">
    <subcellularLocation>
        <location evidence="1">Cytoplasm</location>
        <location evidence="1">Cytoskeleton</location>
    </subcellularLocation>
</comment>
<comment type="PTM">
    <text evidence="1">Phosphorylated by MAP kinases.</text>
</comment>
<comment type="polymorphism">
    <text>Several isoforms of the allergen exist due to polymorphism.</text>
</comment>
<comment type="allergen">
    <text>Causes an allergic reaction in human.</text>
</comment>
<comment type="miscellaneous">
    <text evidence="3">The variability of the residues taking part of IgE-binding epitopes might be responsible of the difference in cross-reactivity among olive pollen cultivars, and between distantly related pollen species, leading to a variable range of allergy reactions among atopic patients.</text>
</comment>
<comment type="similarity">
    <text evidence="2">Belongs to the profilin family.</text>
</comment>
<keyword id="KW-0009">Actin-binding</keyword>
<keyword id="KW-0020">Allergen</keyword>
<keyword id="KW-0963">Cytoplasm</keyword>
<keyword id="KW-0206">Cytoskeleton</keyword>
<keyword id="KW-1015">Disulfide bond</keyword>
<keyword id="KW-0597">Phosphoprotein</keyword>
<reference key="1">
    <citation type="journal article" date="2012" name="PLoS ONE">
        <title>Characterization of profilin polymorphism in pollen with a focus on multifunctionality.</title>
        <authorList>
            <person name="Jimenez-Lopez J.C."/>
            <person name="Morales S."/>
            <person name="Castro A.J."/>
            <person name="Volkmann D."/>
            <person name="Rodriguez-Garcia M.I."/>
            <person name="Alche Jde D."/>
        </authorList>
    </citation>
    <scope>NUCLEOTIDE SEQUENCE [MRNA]</scope>
    <scope>POLYMORPHISM</scope>
    <source>
        <strain>cv. Avellana</strain>
    </source>
</reference>
<reference key="2">
    <citation type="journal article" date="2013" name="PLoS ONE">
        <title>Analysis of the effects of polymorphism on pollen profilin structural functionality and the generation of conformational, T- and B-cell epitopes.</title>
        <authorList>
            <person name="Jimenez-Lopez J.C."/>
            <person name="Rodriguez-Garcia M.I."/>
            <person name="Alche J.D."/>
        </authorList>
    </citation>
    <scope>3D-STRUCTURE MODELING</scope>
    <scope>DISULFIDE BOND</scope>
</reference>
<proteinExistence type="evidence at protein level"/>